<proteinExistence type="evidence at protein level"/>
<organism>
    <name type="scientific">Homo sapiens</name>
    <name type="common">Human</name>
    <dbReference type="NCBI Taxonomy" id="9606"/>
    <lineage>
        <taxon>Eukaryota</taxon>
        <taxon>Metazoa</taxon>
        <taxon>Chordata</taxon>
        <taxon>Craniata</taxon>
        <taxon>Vertebrata</taxon>
        <taxon>Euteleostomi</taxon>
        <taxon>Mammalia</taxon>
        <taxon>Eutheria</taxon>
        <taxon>Euarchontoglires</taxon>
        <taxon>Primates</taxon>
        <taxon>Haplorrhini</taxon>
        <taxon>Catarrhini</taxon>
        <taxon>Hominidae</taxon>
        <taxon>Homo</taxon>
    </lineage>
</organism>
<evidence type="ECO:0000250" key="1"/>
<evidence type="ECO:0000250" key="2">
    <source>
        <dbReference type="UniProtKB" id="P28704"/>
    </source>
</evidence>
<evidence type="ECO:0000255" key="3">
    <source>
        <dbReference type="PROSITE-ProRule" id="PRU00407"/>
    </source>
</evidence>
<evidence type="ECO:0000255" key="4">
    <source>
        <dbReference type="PROSITE-ProRule" id="PRU01189"/>
    </source>
</evidence>
<evidence type="ECO:0000256" key="5">
    <source>
        <dbReference type="SAM" id="MobiDB-lite"/>
    </source>
</evidence>
<evidence type="ECO:0000269" key="6">
    <source>
    </source>
</evidence>
<evidence type="ECO:0000269" key="7">
    <source>
    </source>
</evidence>
<evidence type="ECO:0000269" key="8">
    <source>
    </source>
</evidence>
<evidence type="ECO:0000269" key="9">
    <source>
    </source>
</evidence>
<evidence type="ECO:0000269" key="10">
    <source>
    </source>
</evidence>
<evidence type="ECO:0000269" key="11">
    <source>
    </source>
</evidence>
<evidence type="ECO:0000303" key="12">
    <source ref="5"/>
</evidence>
<evidence type="ECO:0000303" key="13">
    <source ref="6"/>
</evidence>
<evidence type="ECO:0000305" key="14"/>
<evidence type="ECO:0007744" key="15">
    <source>
    </source>
</evidence>
<evidence type="ECO:0007829" key="16">
    <source>
        <dbReference type="PDB" id="7A78"/>
    </source>
</evidence>
<feature type="chain" id="PRO_0000053572" description="Retinoic acid receptor RXR-beta">
    <location>
        <begin position="1"/>
        <end position="533"/>
    </location>
</feature>
<feature type="domain" description="NR LBD" evidence="4 6">
    <location>
        <begin position="296"/>
        <end position="529"/>
    </location>
</feature>
<feature type="DNA-binding region" description="Nuclear receptor" evidence="3">
    <location>
        <begin position="205"/>
        <end position="270"/>
    </location>
</feature>
<feature type="zinc finger region" description="NR C4-type" evidence="3">
    <location>
        <begin position="205"/>
        <end position="225"/>
    </location>
</feature>
<feature type="zinc finger region" description="NR C4-type" evidence="3">
    <location>
        <begin position="241"/>
        <end position="265"/>
    </location>
</feature>
<feature type="region of interest" description="Modulating" evidence="1">
    <location>
        <begin position="1"/>
        <end position="204"/>
    </location>
</feature>
<feature type="region of interest" description="Disordered" evidence="5">
    <location>
        <begin position="1"/>
        <end position="23"/>
    </location>
</feature>
<feature type="region of interest" description="Disordered" evidence="5">
    <location>
        <begin position="36"/>
        <end position="181"/>
    </location>
</feature>
<feature type="region of interest" description="Hinge">
    <location>
        <begin position="271"/>
        <end position="295"/>
    </location>
</feature>
<feature type="region of interest" description="Disordered" evidence="5">
    <location>
        <begin position="276"/>
        <end position="299"/>
    </location>
</feature>
<feature type="region of interest" description="Disordered" evidence="5">
    <location>
        <begin position="313"/>
        <end position="336"/>
    </location>
</feature>
<feature type="compositionally biased region" description="Low complexity" evidence="5">
    <location>
        <begin position="46"/>
        <end position="61"/>
    </location>
</feature>
<feature type="compositionally biased region" description="Basic and acidic residues" evidence="5">
    <location>
        <begin position="67"/>
        <end position="82"/>
    </location>
</feature>
<feature type="compositionally biased region" description="Pro residues" evidence="5">
    <location>
        <begin position="89"/>
        <end position="109"/>
    </location>
</feature>
<feature type="compositionally biased region" description="Pro residues" evidence="5">
    <location>
        <begin position="118"/>
        <end position="131"/>
    </location>
</feature>
<feature type="compositionally biased region" description="Low complexity" evidence="5">
    <location>
        <begin position="132"/>
        <end position="143"/>
    </location>
</feature>
<feature type="compositionally biased region" description="Pro residues" evidence="5">
    <location>
        <begin position="144"/>
        <end position="153"/>
    </location>
</feature>
<feature type="compositionally biased region" description="Basic and acidic residues" evidence="5">
    <location>
        <begin position="276"/>
        <end position="288"/>
    </location>
</feature>
<feature type="compositionally biased region" description="Gly residues" evidence="5">
    <location>
        <begin position="320"/>
        <end position="329"/>
    </location>
</feature>
<feature type="modified residue" description="Omega-N-methylarginine" evidence="15">
    <location>
        <position position="25"/>
    </location>
</feature>
<feature type="splice variant" id="VSP_045587" description="In isoform 2." evidence="12 13">
    <original>D</original>
    <variation>DRSLS</variation>
    <location>
        <position position="418"/>
    </location>
</feature>
<feature type="sequence conflict" description="In Ref. 1; AAA60293." evidence="14" ref="1">
    <original>S</original>
    <variation>T</variation>
    <location>
        <position position="112"/>
    </location>
</feature>
<feature type="helix" evidence="16">
    <location>
        <begin position="301"/>
        <end position="310"/>
    </location>
</feature>
<feature type="helix" evidence="16">
    <location>
        <begin position="335"/>
        <end position="355"/>
    </location>
</feature>
<feature type="helix" evidence="16">
    <location>
        <begin position="360"/>
        <end position="362"/>
    </location>
</feature>
<feature type="helix" evidence="16">
    <location>
        <begin position="365"/>
        <end position="387"/>
    </location>
</feature>
<feature type="turn" evidence="16">
    <location>
        <begin position="388"/>
        <end position="390"/>
    </location>
</feature>
<feature type="strand" evidence="16">
    <location>
        <begin position="391"/>
        <end position="396"/>
    </location>
</feature>
<feature type="strand" evidence="16">
    <location>
        <begin position="402"/>
        <end position="404"/>
    </location>
</feature>
<feature type="helix" evidence="16">
    <location>
        <begin position="405"/>
        <end position="410"/>
    </location>
</feature>
<feature type="helix" evidence="16">
    <location>
        <begin position="414"/>
        <end position="423"/>
    </location>
</feature>
<feature type="helix" evidence="16">
    <location>
        <begin position="425"/>
        <end position="431"/>
    </location>
</feature>
<feature type="helix" evidence="16">
    <location>
        <begin position="435"/>
        <end position="446"/>
    </location>
</feature>
<feature type="helix" evidence="16">
    <location>
        <begin position="457"/>
        <end position="478"/>
    </location>
</feature>
<feature type="helix" evidence="16">
    <location>
        <begin position="485"/>
        <end position="490"/>
    </location>
</feature>
<feature type="helix" evidence="16">
    <location>
        <begin position="493"/>
        <end position="513"/>
    </location>
</feature>
<feature type="helix" evidence="16">
    <location>
        <begin position="520"/>
        <end position="525"/>
    </location>
</feature>
<reference key="1">
    <citation type="journal article" date="1992" name="Cell">
        <title>Purification, cloning, and RXR identity of the HeLa cell factor with which RAR or TR heterodimerizes to bind target sequences efficiently.</title>
        <authorList>
            <person name="Leid M."/>
            <person name="Kastner P."/>
            <person name="Lyons R."/>
            <person name="Nakshatri H."/>
            <person name="Saunders M."/>
            <person name="Zacharewsi T."/>
            <person name="Chen J.Y."/>
            <person name="Staub A."/>
            <person name="Garnier J.-M."/>
            <person name="Mader S."/>
            <person name="Chambon P."/>
        </authorList>
    </citation>
    <scope>NUCLEOTIDE SEQUENCE [MRNA] (ISOFORM 1)</scope>
    <scope>HETERODIMERIZATION</scope>
    <scope>SUBCELLULAR LOCATION</scope>
    <scope>SUBUNIT</scope>
    <scope>FUNCTION</scope>
    <source>
        <tissue>Mammary carcinoma</tissue>
    </source>
</reference>
<reference key="2">
    <citation type="journal article" date="1992" name="Cell">
        <authorList>
            <person name="Leid M."/>
            <person name="Kastner P."/>
            <person name="Lyons R."/>
            <person name="Nakshatri H."/>
            <person name="Saunders M."/>
            <person name="Zacharewsi T."/>
            <person name="Chen J.Y."/>
            <person name="Staub A."/>
            <person name="Garnier J.-M."/>
            <person name="Mader S."/>
            <person name="Chambon P."/>
        </authorList>
    </citation>
    <scope>ERRATUM OF PUBMED:1310259</scope>
    <scope>SEQUENCE REVISION</scope>
</reference>
<reference key="3">
    <citation type="journal article" date="1992" name="Nucleic Acids Res.">
        <title>Isolation of a full-length cDNA clone encoding a N-terminally variant form of the human retinoid X receptor beta.</title>
        <authorList>
            <person name="Fleischhauer K."/>
            <person name="Park J.H."/>
            <person name="Disanto J.P."/>
            <person name="Marks M.S."/>
            <person name="Ozato K."/>
            <person name="Yang S.Y."/>
        </authorList>
    </citation>
    <scope>NUCLEOTIDE SEQUENCE [MRNA] (ISOFORM 1)</scope>
</reference>
<reference key="4">
    <citation type="submission" date="1998-05" db="EMBL/GenBank/DDBJ databases">
        <authorList>
            <person name="Numasawa T."/>
            <person name="Koga H."/>
            <person name="Ueyama K."/>
            <person name="Maeda S."/>
            <person name="Sakou T."/>
            <person name="Harata S."/>
            <person name="Leppert M."/>
            <person name="Inoue I."/>
        </authorList>
    </citation>
    <scope>NUCLEOTIDE SEQUENCE [GENOMIC DNA]</scope>
</reference>
<reference key="5">
    <citation type="submission" date="2010-12" db="EMBL/GenBank/DDBJ databases">
        <title>Isolation of cDNA coding for putatively new variants of multiple human nuclear receptors.</title>
        <authorList>
            <person name="Kaighin V.A."/>
            <person name="Martin A.L."/>
            <person name="Aronstam R.S."/>
        </authorList>
    </citation>
    <scope>NUCLEOTIDE SEQUENCE [MRNA] (ISOFORM 2)</scope>
    <source>
        <tissue>Liver</tissue>
    </source>
</reference>
<reference key="6">
    <citation type="submission" date="2005-03" db="EMBL/GenBank/DDBJ databases">
        <authorList>
            <person name="Totoki Y."/>
            <person name="Toyoda A."/>
            <person name="Takeda T."/>
            <person name="Sakaki Y."/>
            <person name="Tanaka A."/>
            <person name="Yokoyama S."/>
            <person name="Ohara O."/>
            <person name="Nagase T."/>
            <person name="Kikuno R.F."/>
        </authorList>
    </citation>
    <scope>NUCLEOTIDE SEQUENCE [LARGE SCALE MRNA] (ISOFORM 2)</scope>
    <source>
        <tissue>Brain</tissue>
    </source>
</reference>
<reference key="7">
    <citation type="submission" date="1999-01" db="EMBL/GenBank/DDBJ databases">
        <title>Molecular cloning and characterization of the human HRXRB gene and 5' flanking region.</title>
        <authorList>
            <person name="Corella A."/>
            <person name="Vergara A."/>
            <person name="Paez G."/>
            <person name="de Miguel C."/>
            <person name="Encio I."/>
        </authorList>
    </citation>
    <scope>NUCLEOTIDE SEQUENCE [GENOMIC DNA]</scope>
</reference>
<reference key="8">
    <citation type="journal article" date="2003" name="Nature">
        <title>The DNA sequence and analysis of human chromosome 6.</title>
        <authorList>
            <person name="Mungall A.J."/>
            <person name="Palmer S.A."/>
            <person name="Sims S.K."/>
            <person name="Edwards C.A."/>
            <person name="Ashurst J.L."/>
            <person name="Wilming L."/>
            <person name="Jones M.C."/>
            <person name="Horton R."/>
            <person name="Hunt S.E."/>
            <person name="Scott C.E."/>
            <person name="Gilbert J.G.R."/>
            <person name="Clamp M.E."/>
            <person name="Bethel G."/>
            <person name="Milne S."/>
            <person name="Ainscough R."/>
            <person name="Almeida J.P."/>
            <person name="Ambrose K.D."/>
            <person name="Andrews T.D."/>
            <person name="Ashwell R.I.S."/>
            <person name="Babbage A.K."/>
            <person name="Bagguley C.L."/>
            <person name="Bailey J."/>
            <person name="Banerjee R."/>
            <person name="Barker D.J."/>
            <person name="Barlow K.F."/>
            <person name="Bates K."/>
            <person name="Beare D.M."/>
            <person name="Beasley H."/>
            <person name="Beasley O."/>
            <person name="Bird C.P."/>
            <person name="Blakey S.E."/>
            <person name="Bray-Allen S."/>
            <person name="Brook J."/>
            <person name="Brown A.J."/>
            <person name="Brown J.Y."/>
            <person name="Burford D.C."/>
            <person name="Burrill W."/>
            <person name="Burton J."/>
            <person name="Carder C."/>
            <person name="Carter N.P."/>
            <person name="Chapman J.C."/>
            <person name="Clark S.Y."/>
            <person name="Clark G."/>
            <person name="Clee C.M."/>
            <person name="Clegg S."/>
            <person name="Cobley V."/>
            <person name="Collier R.E."/>
            <person name="Collins J.E."/>
            <person name="Colman L.K."/>
            <person name="Corby N.R."/>
            <person name="Coville G.J."/>
            <person name="Culley K.M."/>
            <person name="Dhami P."/>
            <person name="Davies J."/>
            <person name="Dunn M."/>
            <person name="Earthrowl M.E."/>
            <person name="Ellington A.E."/>
            <person name="Evans K.A."/>
            <person name="Faulkner L."/>
            <person name="Francis M.D."/>
            <person name="Frankish A."/>
            <person name="Frankland J."/>
            <person name="French L."/>
            <person name="Garner P."/>
            <person name="Garnett J."/>
            <person name="Ghori M.J."/>
            <person name="Gilby L.M."/>
            <person name="Gillson C.J."/>
            <person name="Glithero R.J."/>
            <person name="Grafham D.V."/>
            <person name="Grant M."/>
            <person name="Gribble S."/>
            <person name="Griffiths C."/>
            <person name="Griffiths M.N.D."/>
            <person name="Hall R."/>
            <person name="Halls K.S."/>
            <person name="Hammond S."/>
            <person name="Harley J.L."/>
            <person name="Hart E.A."/>
            <person name="Heath P.D."/>
            <person name="Heathcott R."/>
            <person name="Holmes S.J."/>
            <person name="Howden P.J."/>
            <person name="Howe K.L."/>
            <person name="Howell G.R."/>
            <person name="Huckle E."/>
            <person name="Humphray S.J."/>
            <person name="Humphries M.D."/>
            <person name="Hunt A.R."/>
            <person name="Johnson C.M."/>
            <person name="Joy A.A."/>
            <person name="Kay M."/>
            <person name="Keenan S.J."/>
            <person name="Kimberley A.M."/>
            <person name="King A."/>
            <person name="Laird G.K."/>
            <person name="Langford C."/>
            <person name="Lawlor S."/>
            <person name="Leongamornlert D.A."/>
            <person name="Leversha M."/>
            <person name="Lloyd C.R."/>
            <person name="Lloyd D.M."/>
            <person name="Loveland J.E."/>
            <person name="Lovell J."/>
            <person name="Martin S."/>
            <person name="Mashreghi-Mohammadi M."/>
            <person name="Maslen G.L."/>
            <person name="Matthews L."/>
            <person name="McCann O.T."/>
            <person name="McLaren S.J."/>
            <person name="McLay K."/>
            <person name="McMurray A."/>
            <person name="Moore M.J.F."/>
            <person name="Mullikin J.C."/>
            <person name="Niblett D."/>
            <person name="Nickerson T."/>
            <person name="Novik K.L."/>
            <person name="Oliver K."/>
            <person name="Overton-Larty E.K."/>
            <person name="Parker A."/>
            <person name="Patel R."/>
            <person name="Pearce A.V."/>
            <person name="Peck A.I."/>
            <person name="Phillimore B.J.C.T."/>
            <person name="Phillips S."/>
            <person name="Plumb R.W."/>
            <person name="Porter K.M."/>
            <person name="Ramsey Y."/>
            <person name="Ranby S.A."/>
            <person name="Rice C.M."/>
            <person name="Ross M.T."/>
            <person name="Searle S.M."/>
            <person name="Sehra H.K."/>
            <person name="Sheridan E."/>
            <person name="Skuce C.D."/>
            <person name="Smith S."/>
            <person name="Smith M."/>
            <person name="Spraggon L."/>
            <person name="Squares S.L."/>
            <person name="Steward C.A."/>
            <person name="Sycamore N."/>
            <person name="Tamlyn-Hall G."/>
            <person name="Tester J."/>
            <person name="Theaker A.J."/>
            <person name="Thomas D.W."/>
            <person name="Thorpe A."/>
            <person name="Tracey A."/>
            <person name="Tromans A."/>
            <person name="Tubby B."/>
            <person name="Wall M."/>
            <person name="Wallis J.M."/>
            <person name="West A.P."/>
            <person name="White S.S."/>
            <person name="Whitehead S.L."/>
            <person name="Whittaker H."/>
            <person name="Wild A."/>
            <person name="Willey D.J."/>
            <person name="Wilmer T.E."/>
            <person name="Wood J.M."/>
            <person name="Wray P.W."/>
            <person name="Wyatt J.C."/>
            <person name="Young L."/>
            <person name="Younger R.M."/>
            <person name="Bentley D.R."/>
            <person name="Coulson A."/>
            <person name="Durbin R.M."/>
            <person name="Hubbard T."/>
            <person name="Sulston J.E."/>
            <person name="Dunham I."/>
            <person name="Rogers J."/>
            <person name="Beck S."/>
        </authorList>
    </citation>
    <scope>NUCLEOTIDE SEQUENCE [LARGE SCALE GENOMIC DNA]</scope>
</reference>
<reference key="9">
    <citation type="journal article" date="2004" name="Genome Res.">
        <title>The status, quality, and expansion of the NIH full-length cDNA project: the Mammalian Gene Collection (MGC).</title>
        <authorList>
            <consortium name="The MGC Project Team"/>
        </authorList>
    </citation>
    <scope>NUCLEOTIDE SEQUENCE [LARGE SCALE MRNA] (ISOFORM 1)</scope>
    <source>
        <tissue>Brain</tissue>
    </source>
</reference>
<reference key="10">
    <citation type="journal article" date="1993" name="Hum. Genet.">
        <title>Cloning and chromosome mapping of human retinoid X receptor beta: selective amino acid sequence conservation of a nuclear hormone receptor in mammals.</title>
        <authorList>
            <person name="Fleischhauer K."/>
            <person name="McBride O.W."/>
            <person name="DiSanto J.P."/>
            <person name="Ozato K."/>
            <person name="Yang S.Y."/>
        </authorList>
    </citation>
    <scope>NUCLEOTIDE SEQUENCE [MRNA] OF 161-331 (ISOFORM 1)</scope>
    <scope>TISSUE SPECIFICITY</scope>
</reference>
<reference key="11">
    <citation type="journal article" date="2014" name="J. Proteomics">
        <title>An enzyme assisted RP-RPLC approach for in-depth analysis of human liver phosphoproteome.</title>
        <authorList>
            <person name="Bian Y."/>
            <person name="Song C."/>
            <person name="Cheng K."/>
            <person name="Dong M."/>
            <person name="Wang F."/>
            <person name="Huang J."/>
            <person name="Sun D."/>
            <person name="Wang L."/>
            <person name="Ye M."/>
            <person name="Zou H."/>
        </authorList>
    </citation>
    <scope>IDENTIFICATION BY MASS SPECTROMETRY [LARGE SCALE ANALYSIS]</scope>
    <source>
        <tissue>Liver</tissue>
    </source>
</reference>
<reference key="12">
    <citation type="journal article" date="2014" name="Mol. Cell. Proteomics">
        <title>Immunoaffinity enrichment and mass spectrometry analysis of protein methylation.</title>
        <authorList>
            <person name="Guo A."/>
            <person name="Gu H."/>
            <person name="Zhou J."/>
            <person name="Mulhern D."/>
            <person name="Wang Y."/>
            <person name="Lee K.A."/>
            <person name="Yang V."/>
            <person name="Aguiar M."/>
            <person name="Kornhauser J."/>
            <person name="Jia X."/>
            <person name="Ren J."/>
            <person name="Beausoleil S.A."/>
            <person name="Silva J.C."/>
            <person name="Vemulapalli V."/>
            <person name="Bedford M.T."/>
            <person name="Comb M.J."/>
        </authorList>
    </citation>
    <scope>METHYLATION [LARGE SCALE ANALYSIS] AT ARG-25</scope>
    <scope>IDENTIFICATION BY MASS SPECTROMETRY [LARGE SCALE ANALYSIS]</scope>
    <source>
        <tissue>Colon carcinoma</tissue>
    </source>
</reference>
<reference key="13">
    <citation type="journal article" date="2015" name="Brain">
        <title>Retinoid X receptor activation reverses age-related deficiencies in myelin debris phagocytosis and remyelination.</title>
        <authorList>
            <person name="Natrajan M.S."/>
            <person name="de la Fuente A.G."/>
            <person name="Crawford A.H."/>
            <person name="Linehan E."/>
            <person name="Nunez V."/>
            <person name="Johnson K.R."/>
            <person name="Wu T."/>
            <person name="Fitzgerald D.C."/>
            <person name="Ricote M."/>
            <person name="Bielekova B."/>
            <person name="Franklin R.J."/>
        </authorList>
    </citation>
    <scope>TISSUE SPECIFICITY</scope>
    <scope>REPRESSION BY AGING</scope>
</reference>
<reference key="14">
    <citation type="journal article" date="2017" name="Proc. Natl. Acad. Sci. U.S.A.">
        <title>MicroRNA-10a is crucial for endothelial response to different flow patterns via interaction of retinoid acid receptors and histone deacetylases.</title>
        <authorList>
            <person name="Lee D.Y."/>
            <person name="Lin T.E."/>
            <person name="Lee C.I."/>
            <person name="Zhou J."/>
            <person name="Huang Y.H."/>
            <person name="Lee P.L."/>
            <person name="Shih Y.T."/>
            <person name="Chien S."/>
            <person name="Chiu J.J."/>
        </authorList>
    </citation>
    <scope>SUBCELLULAR LOCATION</scope>
    <scope>TISSUE SPECIFICITY</scope>
</reference>
<reference key="15">
    <citation type="journal article" date="2002" name="J. Biol. Chem.">
        <title>The structural basis for the specificity of retinoid-X receptor-selective agonists: new insights into the role of helix H12.</title>
        <authorList>
            <person name="Love J.D."/>
            <person name="Gooch J.T."/>
            <person name="Benko S."/>
            <person name="Li C."/>
            <person name="Nagy L."/>
            <person name="Chatterjee V.K."/>
            <person name="Evans R.M."/>
            <person name="Schwabe J.W."/>
        </authorList>
    </citation>
    <scope>X-RAY CRYSTALLOGRAPHY (2.7 ANGSTROMS) OF 299-522 IN COMPLEX WITH THE RXR-SPECIFIC AGONIST LG100268</scope>
    <scope>SUBUNIT</scope>
</reference>
<reference key="16">
    <citation type="journal article" date="2003" name="EMBO J.">
        <title>Crystal structure of the heterodimeric complex of LXRalpha and RXRbeta ligand-binding domains in a fully agonistic conformation.</title>
        <authorList>
            <person name="Svensson S."/>
            <person name="Ostberg T."/>
            <person name="Jacobsson M."/>
            <person name="Norstrom C."/>
            <person name="Stefansson K."/>
            <person name="Hallen D."/>
            <person name="Johansson I.C."/>
            <person name="Zachrisson K."/>
            <person name="Ogg D."/>
            <person name="Jendeberg L."/>
        </authorList>
    </citation>
    <scope>X-RAY CRYSTALLOGRAPHY (2.9 ANGSTROMS) OF 298-533 IN COMPLEX WITH NR1H3</scope>
</reference>
<accession>P28702</accession>
<accession>P28703</accession>
<accession>Q59G65</accession>
<accession>Q5JP92</accession>
<accession>Q5STQ1</accession>
<comment type="function">
    <text evidence="8">Receptor for retinoic acid. Retinoic acid receptors bind as heterodimers to their target response elements in response to their ligands, all-trans or 9-cis retinoic acid, and regulate gene expression in various biological processes. The RAR/RXR heterodimers bind to the retinoic acid response elements (RARE).</text>
</comment>
<comment type="subunit">
    <text evidence="2 6 7 8">Homodimer (in vitro) (PubMed:11782480). Heterodimer with other retinoic acid receptor family members. Binds DNA preferentially as a RAR/RXR heterodimer (PubMed:1310259). Interacts with NR1H3 (PubMed:12970175). Interacts with AKAP13 (By similarity).</text>
</comment>
<comment type="interaction">
    <interactant intactId="EBI-748576">
        <id>P28702</id>
    </interactant>
    <interactant intactId="EBI-1055161">
        <id>Q00975</id>
        <label>CACNA1B</label>
    </interactant>
    <organismsDiffer>false</organismsDiffer>
    <experiments>3</experiments>
</comment>
<comment type="interaction">
    <interactant intactId="EBI-748576">
        <id>P28702</id>
    </interactant>
    <interactant intactId="EBI-709754">
        <id>Q9HB07</id>
        <label>MYG1</label>
    </interactant>
    <organismsDiffer>false</organismsDiffer>
    <experiments>3</experiments>
</comment>
<comment type="interaction">
    <interactant intactId="EBI-748576">
        <id>P28702</id>
    </interactant>
    <interactant intactId="EBI-10177172">
        <id>F1D8P7</id>
        <label>NR1H2</label>
    </interactant>
    <organismsDiffer>false</organismsDiffer>
    <experiments>6</experiments>
</comment>
<comment type="interaction">
    <interactant intactId="EBI-748576">
        <id>P28702</id>
    </interactant>
    <interactant intactId="EBI-781356">
        <id>Q13133</id>
        <label>NR1H3</label>
    </interactant>
    <organismsDiffer>false</organismsDiffer>
    <experiments>4</experiments>
</comment>
<comment type="interaction">
    <interactant intactId="EBI-748576">
        <id>P28702</id>
    </interactant>
    <interactant intactId="EBI-11952806">
        <id>Q13133-3</id>
        <label>NR1H3</label>
    </interactant>
    <organismsDiffer>false</organismsDiffer>
    <experiments>6</experiments>
</comment>
<comment type="interaction">
    <interactant intactId="EBI-748576">
        <id>P28702</id>
    </interactant>
    <interactant intactId="EBI-12417284">
        <id>Q96RI1-1</id>
        <label>NR1H4</label>
    </interactant>
    <organismsDiffer>false</organismsDiffer>
    <experiments>7</experiments>
</comment>
<comment type="interaction">
    <interactant intactId="EBI-748576">
        <id>P28702</id>
    </interactant>
    <interactant intactId="EBI-493507">
        <id>P04150</id>
        <label>NR3C1</label>
    </interactant>
    <organismsDiffer>false</organismsDiffer>
    <experiments>4</experiments>
</comment>
<comment type="interaction">
    <interactant intactId="EBI-748576">
        <id>P28702</id>
    </interactant>
    <interactant intactId="EBI-79165">
        <id>Q9NRD5</id>
        <label>PICK1</label>
    </interactant>
    <organismsDiffer>false</organismsDiffer>
    <experiments>3</experiments>
</comment>
<comment type="interaction">
    <interactant intactId="EBI-748576">
        <id>P28702</id>
    </interactant>
    <interactant intactId="EBI-781384">
        <id>P37231</id>
        <label>PPARG</label>
    </interactant>
    <organismsDiffer>false</organismsDiffer>
    <experiments>5</experiments>
</comment>
<comment type="interaction">
    <interactant intactId="EBI-748576">
        <id>P28702</id>
    </interactant>
    <interactant intactId="EBI-413374">
        <id>P10276</id>
        <label>RARA</label>
    </interactant>
    <organismsDiffer>false</organismsDiffer>
    <experiments>16</experiments>
</comment>
<comment type="interaction">
    <interactant intactId="EBI-748576">
        <id>P28702</id>
    </interactant>
    <interactant intactId="EBI-10197061">
        <id>P10276-2</id>
        <label>RARA</label>
    </interactant>
    <organismsDiffer>false</organismsDiffer>
    <experiments>4</experiments>
</comment>
<comment type="interaction">
    <interactant intactId="EBI-748576">
        <id>P28702</id>
    </interactant>
    <interactant intactId="EBI-8583223">
        <id>P10826-2</id>
        <label>RARB</label>
    </interactant>
    <organismsDiffer>false</organismsDiffer>
    <experiments>10</experiments>
</comment>
<comment type="interaction">
    <interactant intactId="EBI-748576">
        <id>P28702</id>
    </interactant>
    <interactant intactId="EBI-2568901">
        <id>P13631</id>
        <label>RARG</label>
    </interactant>
    <organismsDiffer>false</organismsDiffer>
    <experiments>8</experiments>
</comment>
<comment type="interaction">
    <interactant intactId="EBI-748576">
        <id>P28702</id>
    </interactant>
    <interactant intactId="EBI-2822161">
        <id>Q6IQ16</id>
        <label>SPOPL</label>
    </interactant>
    <organismsDiffer>false</organismsDiffer>
    <experiments>3</experiments>
</comment>
<comment type="interaction">
    <interactant intactId="EBI-16429492">
        <id>P28702-3</id>
    </interactant>
    <interactant intactId="EBI-739580">
        <id>Q13137</id>
        <label>CALCOCO2</label>
    </interactant>
    <organismsDiffer>false</organismsDiffer>
    <experiments>3</experiments>
</comment>
<comment type="interaction">
    <interactant intactId="EBI-16429492">
        <id>P28702-3</id>
    </interactant>
    <interactant intactId="EBI-371922">
        <id>Q96B26</id>
        <label>EXOSC8</label>
    </interactant>
    <organismsDiffer>false</organismsDiffer>
    <experiments>3</experiments>
</comment>
<comment type="interaction">
    <interactant intactId="EBI-16429492">
        <id>P28702-3</id>
    </interactant>
    <interactant intactId="EBI-618309">
        <id>Q08379</id>
        <label>GOLGA2</label>
    </interactant>
    <organismsDiffer>false</organismsDiffer>
    <experiments>6</experiments>
</comment>
<comment type="interaction">
    <interactant intactId="EBI-16429492">
        <id>P28702-3</id>
    </interactant>
    <interactant intactId="EBI-10171697">
        <id>Q6A162</id>
        <label>KRT40</label>
    </interactant>
    <organismsDiffer>false</organismsDiffer>
    <experiments>3</experiments>
</comment>
<comment type="interaction">
    <interactant intactId="EBI-16429492">
        <id>P28702-3</id>
    </interactant>
    <interactant intactId="EBI-10172526">
        <id>Q9UJV3-2</id>
        <label>MID2</label>
    </interactant>
    <organismsDiffer>false</organismsDiffer>
    <experiments>3</experiments>
</comment>
<comment type="interaction">
    <interactant intactId="EBI-16429492">
        <id>P28702-3</id>
    </interactant>
    <interactant intactId="EBI-11952806">
        <id>Q13133-3</id>
        <label>NR1H3</label>
    </interactant>
    <organismsDiffer>false</organismsDiffer>
    <experiments>3</experiments>
</comment>
<comment type="interaction">
    <interactant intactId="EBI-16429492">
        <id>P28702-3</id>
    </interactant>
    <interactant intactId="EBI-12417284">
        <id>Q96RI1-1</id>
        <label>NR1H4</label>
    </interactant>
    <organismsDiffer>false</organismsDiffer>
    <experiments>3</experiments>
</comment>
<comment type="interaction">
    <interactant intactId="EBI-16429492">
        <id>P28702-3</id>
    </interactant>
    <interactant intactId="EBI-1050964">
        <id>O43586</id>
        <label>PSTPIP1</label>
    </interactant>
    <organismsDiffer>false</organismsDiffer>
    <experiments>3</experiments>
</comment>
<comment type="interaction">
    <interactant intactId="EBI-16429492">
        <id>P28702-3</id>
    </interactant>
    <interactant intactId="EBI-413374">
        <id>P10276</id>
        <label>RARA</label>
    </interactant>
    <organismsDiffer>false</organismsDiffer>
    <experiments>3</experiments>
</comment>
<comment type="interaction">
    <interactant intactId="EBI-16429492">
        <id>P28702-3</id>
    </interactant>
    <interactant intactId="EBI-8583223">
        <id>P10826-2</id>
        <label>RARB</label>
    </interactant>
    <organismsDiffer>false</organismsDiffer>
    <experiments>3</experiments>
</comment>
<comment type="interaction">
    <interactant intactId="EBI-16429492">
        <id>P28702-3</id>
    </interactant>
    <interactant intactId="EBI-11522811">
        <id>Q8IUQ4-2</id>
        <label>SIAH1</label>
    </interactant>
    <organismsDiffer>false</organismsDiffer>
    <experiments>3</experiments>
</comment>
<comment type="interaction">
    <interactant intactId="EBI-16429492">
        <id>P28702-3</id>
    </interactant>
    <interactant intactId="EBI-473249">
        <id>O75528</id>
        <label>TADA3</label>
    </interactant>
    <organismsDiffer>false</organismsDiffer>
    <experiments>3</experiments>
</comment>
<comment type="interaction">
    <interactant intactId="EBI-16429492">
        <id>P28702-3</id>
    </interactant>
    <interactant intactId="EBI-717422">
        <id>Q12800</id>
        <label>TFCP2</label>
    </interactant>
    <organismsDiffer>false</organismsDiffer>
    <experiments>3</experiments>
</comment>
<comment type="interaction">
    <interactant intactId="EBI-16429492">
        <id>P28702-3</id>
    </interactant>
    <interactant intactId="EBI-1105213">
        <id>Q9UBB9</id>
        <label>TFIP11</label>
    </interactant>
    <organismsDiffer>false</organismsDiffer>
    <experiments>3</experiments>
</comment>
<comment type="interaction">
    <interactant intactId="EBI-16429492">
        <id>P28702-3</id>
    </interactant>
    <interactant intactId="EBI-11952721">
        <id>Q05BL1</id>
        <label>TP53BP2</label>
    </interactant>
    <organismsDiffer>false</organismsDiffer>
    <experiments>3</experiments>
</comment>
<comment type="interaction">
    <interactant intactId="EBI-16429492">
        <id>P28702-3</id>
    </interactant>
    <interactant intactId="EBI-719493">
        <id>P14373</id>
        <label>TRIM27</label>
    </interactant>
    <organismsDiffer>false</organismsDiffer>
    <experiments>3</experiments>
</comment>
<comment type="interaction">
    <interactant intactId="EBI-16429492">
        <id>P28702-3</id>
    </interactant>
    <interactant intactId="EBI-741602">
        <id>O94972</id>
        <label>TRIM37</label>
    </interactant>
    <organismsDiffer>false</organismsDiffer>
    <experiments>3</experiments>
</comment>
<comment type="interaction">
    <interactant intactId="EBI-16429492">
        <id>P28702-3</id>
    </interactant>
    <interactant intactId="EBI-348604">
        <id>Q96S82</id>
        <label>UBL7</label>
    </interactant>
    <organismsDiffer>false</organismsDiffer>
    <experiments>3</experiments>
</comment>
<comment type="subcellular location">
    <subcellularLocation>
        <location evidence="8 10">Nucleus</location>
    </subcellularLocation>
    <subcellularLocation>
        <location evidence="10">Cytoplasm</location>
    </subcellularLocation>
</comment>
<comment type="alternative products">
    <event type="alternative splicing"/>
    <isoform>
        <id>P28702-1</id>
        <name>1</name>
        <sequence type="displayed"/>
    </isoform>
    <isoform>
        <id>P28702-3</id>
        <name>2</name>
        <sequence type="described" ref="VSP_045587"/>
    </isoform>
</comment>
<comment type="tissue specificity">
    <text evidence="9 10 11">Expressed in aortic endothelial cells (at protein level) (PubMed:28167758). Expressed in monocytes (PubMed:26463675). Expressed in a variety of tumor cell lines.</text>
</comment>
<comment type="induction">
    <text evidence="9">Down-regulated by aging.</text>
</comment>
<comment type="domain">
    <text evidence="14">Composed of three domains: a modulating N-terminal domain, a DNA-binding domain and a C-terminal ligand-binding domain.</text>
</comment>
<comment type="similarity">
    <text evidence="14">Belongs to the nuclear hormone receptor family. NR2 subfamily.</text>
</comment>
<comment type="sequence caution" evidence="14">
    <conflict type="erroneous initiation">
        <sequence resource="EMBL-CDS" id="BAD92481"/>
    </conflict>
    <text>Extended N-terminus.</text>
</comment>
<protein>
    <recommendedName>
        <fullName>Retinoic acid receptor RXR-beta</fullName>
    </recommendedName>
    <alternativeName>
        <fullName>Nuclear receptor subfamily 2 group B member 2</fullName>
    </alternativeName>
    <alternativeName>
        <fullName>Retinoid X receptor beta</fullName>
    </alternativeName>
</protein>
<gene>
    <name type="primary">RXRB</name>
    <name type="synonym">NR2B2</name>
</gene>
<keyword id="KW-0002">3D-structure</keyword>
<keyword id="KW-0025">Alternative splicing</keyword>
<keyword id="KW-0963">Cytoplasm</keyword>
<keyword id="KW-0238">DNA-binding</keyword>
<keyword id="KW-0479">Metal-binding</keyword>
<keyword id="KW-0488">Methylation</keyword>
<keyword id="KW-0539">Nucleus</keyword>
<keyword id="KW-1267">Proteomics identification</keyword>
<keyword id="KW-0675">Receptor</keyword>
<keyword id="KW-1185">Reference proteome</keyword>
<keyword id="KW-0804">Transcription</keyword>
<keyword id="KW-0805">Transcription regulation</keyword>
<keyword id="KW-0862">Zinc</keyword>
<keyword id="KW-0863">Zinc-finger</keyword>
<sequence>MSWAARPPFLPQRHAAGQCGPVGVRKEMHCGVASRWRRRRPWLDPAAAAAAAVAGGEQQTPEPEPGEAGRDGMGDSGRDSRSPDSSSPNPLPQGVPPPSPPGPPLPPSTAPSLGGSGAPPPPPMPPPPLGSPFPVISSSMGSPGLPPPAPPGFSGPVSSPQINSTVSLPGGGSGPPEDVKPPVLGVRGLHCPPPPGGPGAGKRLCAICGDRSSGKHYGVYSCEGCKGFFKRTIRKDLTYSCRDNKDCTVDKRQRNRCQYCRYQKCLATGMKREAVQEERQRGKDKDGDGEGAGGAPEEMPVDRILEAELAVEQKSDQGVEGPGGTGGSGSSPNDPVTNICQAADKQLFTLVEWAKRIPHFSSLPLDDQVILLRAGWNELLIASFSHRSIDVRDGILLATGLHVHRNSAHSAGVGAIFDRVLTELVSKMRDMRMDKTELGCLRAIILFNPDAKGLSNPSEVEVLREKVYASLETYCKQKYPEQQGRFAKLLLRLPALRSIGLKCLEHLFFFKLIGDTPIDTFLMEMLEAPHQLA</sequence>
<name>RXRB_HUMAN</name>
<dbReference type="EMBL" id="M84820">
    <property type="protein sequence ID" value="AAA60293.1"/>
    <property type="molecule type" value="mRNA"/>
</dbReference>
<dbReference type="EMBL" id="X63522">
    <property type="protein sequence ID" value="CAA45087.1"/>
    <property type="molecule type" value="mRNA"/>
</dbReference>
<dbReference type="EMBL" id="AF065396">
    <property type="protein sequence ID" value="AAC18599.1"/>
    <property type="molecule type" value="Genomic_DNA"/>
</dbReference>
<dbReference type="EMBL" id="AF120161">
    <property type="protein sequence ID" value="AAD13794.1"/>
    <property type="molecule type" value="Genomic_DNA"/>
</dbReference>
<dbReference type="EMBL" id="HQ709179">
    <property type="protein sequence ID" value="ADZ17386.1"/>
    <property type="molecule type" value="mRNA"/>
</dbReference>
<dbReference type="EMBL" id="AB209244">
    <property type="protein sequence ID" value="BAD92481.1"/>
    <property type="status" value="ALT_INIT"/>
    <property type="molecule type" value="mRNA"/>
</dbReference>
<dbReference type="EMBL" id="AL031228">
    <property type="protein sequence ID" value="CAA20239.1"/>
    <property type="molecule type" value="Genomic_DNA"/>
</dbReference>
<dbReference type="EMBL" id="AL844527">
    <property type="status" value="NOT_ANNOTATED_CDS"/>
    <property type="molecule type" value="Genomic_DNA"/>
</dbReference>
<dbReference type="EMBL" id="CR936877">
    <property type="status" value="NOT_ANNOTATED_CDS"/>
    <property type="molecule type" value="Genomic_DNA"/>
</dbReference>
<dbReference type="EMBL" id="CR759733">
    <property type="status" value="NOT_ANNOTATED_CDS"/>
    <property type="molecule type" value="Genomic_DNA"/>
</dbReference>
<dbReference type="EMBL" id="CR354565">
    <property type="status" value="NOT_ANNOTATED_CDS"/>
    <property type="molecule type" value="Genomic_DNA"/>
</dbReference>
<dbReference type="EMBL" id="AL645940">
    <property type="status" value="NOT_ANNOTATED_CDS"/>
    <property type="molecule type" value="Genomic_DNA"/>
</dbReference>
<dbReference type="EMBL" id="AL662824">
    <property type="status" value="NOT_ANNOTATED_CDS"/>
    <property type="molecule type" value="Genomic_DNA"/>
</dbReference>
<dbReference type="EMBL" id="BC001167">
    <property type="protein sequence ID" value="AAH01167.1"/>
    <property type="molecule type" value="mRNA"/>
</dbReference>
<dbReference type="EMBL" id="X66424">
    <property type="status" value="NOT_ANNOTATED_CDS"/>
    <property type="molecule type" value="mRNA"/>
</dbReference>
<dbReference type="CCDS" id="CCDS4768.1">
    <molecule id="P28702-1"/>
</dbReference>
<dbReference type="CCDS" id="CCDS59007.1">
    <molecule id="P28702-3"/>
</dbReference>
<dbReference type="PIR" id="S37781">
    <property type="entry name" value="S37781"/>
</dbReference>
<dbReference type="RefSeq" id="NP_001257330.1">
    <molecule id="P28702-3"/>
    <property type="nucleotide sequence ID" value="NM_001270401.2"/>
</dbReference>
<dbReference type="RefSeq" id="NP_068811.1">
    <molecule id="P28702-1"/>
    <property type="nucleotide sequence ID" value="NM_021976.5"/>
</dbReference>
<dbReference type="PDB" id="1H9U">
    <property type="method" value="X-ray"/>
    <property type="resolution" value="2.70 A"/>
    <property type="chains" value="A/B/C/D=299-522"/>
</dbReference>
<dbReference type="PDB" id="1UHL">
    <property type="method" value="X-ray"/>
    <property type="resolution" value="2.90 A"/>
    <property type="chains" value="A=298-533"/>
</dbReference>
<dbReference type="PDB" id="5HJP">
    <property type="method" value="X-ray"/>
    <property type="resolution" value="2.60 A"/>
    <property type="chains" value="A/C=299-533"/>
</dbReference>
<dbReference type="PDB" id="5I4V">
    <property type="method" value="X-ray"/>
    <property type="resolution" value="2.61 A"/>
    <property type="chains" value="B/F=293-528"/>
</dbReference>
<dbReference type="PDB" id="5KYA">
    <property type="method" value="X-ray"/>
    <property type="resolution" value="2.60 A"/>
    <property type="chains" value="B/F=293-528"/>
</dbReference>
<dbReference type="PDB" id="5KYJ">
    <property type="method" value="X-ray"/>
    <property type="resolution" value="2.80 A"/>
    <property type="chains" value="B/F=293-528"/>
</dbReference>
<dbReference type="PDB" id="7A78">
    <property type="method" value="X-ray"/>
    <property type="resolution" value="1.72 A"/>
    <property type="chains" value="A=298-533"/>
</dbReference>
<dbReference type="PDBsum" id="1H9U"/>
<dbReference type="PDBsum" id="1UHL"/>
<dbReference type="PDBsum" id="5HJP"/>
<dbReference type="PDBsum" id="5I4V"/>
<dbReference type="PDBsum" id="5KYA"/>
<dbReference type="PDBsum" id="5KYJ"/>
<dbReference type="PDBsum" id="7A78"/>
<dbReference type="SMR" id="P28702"/>
<dbReference type="BioGRID" id="112169">
    <property type="interactions" value="59"/>
</dbReference>
<dbReference type="ComplexPortal" id="CPX-652">
    <property type="entry name" value="RXRbeta-LXRbeta nuclear hormone receptor complex"/>
</dbReference>
<dbReference type="ComplexPortal" id="CPX-716">
    <property type="entry name" value="RXRbeta-LXRalpha nuclear hormone receptor complex"/>
</dbReference>
<dbReference type="ComplexPortal" id="CPX-871">
    <property type="entry name" value="RXRbeta-VDR nuclear hormone receptor complex"/>
</dbReference>
<dbReference type="CORUM" id="P28702"/>
<dbReference type="FunCoup" id="P28702">
    <property type="interactions" value="3145"/>
</dbReference>
<dbReference type="IntAct" id="P28702">
    <property type="interactions" value="69"/>
</dbReference>
<dbReference type="MINT" id="P28702"/>
<dbReference type="STRING" id="9606.ENSP00000363817"/>
<dbReference type="BindingDB" id="P28702"/>
<dbReference type="ChEMBL" id="CHEMBL1870"/>
<dbReference type="DrugBank" id="DB08175">
    <property type="generic name" value="(2E,4E)-11-METHOXY-3,7,11-TRIMETHYLDODECA-2,4-DIENOIC ACID"/>
</dbReference>
<dbReference type="DrugBank" id="DB00459">
    <property type="generic name" value="Acitretin"/>
</dbReference>
<dbReference type="DrugBank" id="DB00210">
    <property type="generic name" value="Adapalene"/>
</dbReference>
<dbReference type="DrugBank" id="DB00523">
    <property type="generic name" value="Alitretinoin"/>
</dbReference>
<dbReference type="DrugBank" id="DB00307">
    <property type="generic name" value="Bexarotene"/>
</dbReference>
<dbReference type="DrugBank" id="DB01393">
    <property type="generic name" value="Bezafibrate"/>
</dbReference>
<dbReference type="DrugBank" id="DB03756">
    <property type="generic name" value="Doconexent"/>
</dbReference>
<dbReference type="DrugBank" id="DB00926">
    <property type="generic name" value="Etretinate"/>
</dbReference>
<dbReference type="DrugBank" id="DB01941">
    <property type="generic name" value="LG-100268"/>
</dbReference>
<dbReference type="DrugBank" id="DB07929">
    <property type="generic name" value="N-(TERT-BUTYL)-3,5-DIMETHYL-N'-[(5-METHYL-2,3-DIHYDRO-1,4-BENZODIOXIN-6-YL)CARBONYL]BENZOHYDRAZIDE"/>
</dbReference>
<dbReference type="DrugBank" id="DB02746">
    <property type="generic name" value="Phthalic Acid"/>
</dbReference>
<dbReference type="DrugBank" id="DB00412">
    <property type="generic name" value="Rosiglitazone"/>
</dbReference>
<dbReference type="DrugBank" id="DB00799">
    <property type="generic name" value="Tazarotene"/>
</dbReference>
<dbReference type="DrugBank" id="DB07080">
    <property type="generic name" value="TO-901317"/>
</dbReference>
<dbReference type="DrugBank" id="DB00755">
    <property type="generic name" value="Tretinoin"/>
</dbReference>
<dbReference type="DrugCentral" id="P28702"/>
<dbReference type="GuidetoPHARMACOLOGY" id="611"/>
<dbReference type="MoonDB" id="P28702">
    <property type="type" value="Predicted"/>
</dbReference>
<dbReference type="GlyGen" id="P28702">
    <property type="glycosylation" value="1 site, 1 O-linked glycan (1 site)"/>
</dbReference>
<dbReference type="iPTMnet" id="P28702"/>
<dbReference type="PhosphoSitePlus" id="P28702"/>
<dbReference type="BioMuta" id="RXRB"/>
<dbReference type="DMDM" id="1350911"/>
<dbReference type="jPOST" id="P28702"/>
<dbReference type="MassIVE" id="P28702"/>
<dbReference type="PaxDb" id="9606-ENSP00000363817"/>
<dbReference type="PeptideAtlas" id="P28702"/>
<dbReference type="ProteomicsDB" id="54494">
    <molecule id="P28702-1"/>
</dbReference>
<dbReference type="ProteomicsDB" id="63911"/>
<dbReference type="Pumba" id="P28702"/>
<dbReference type="Antibodypedia" id="28936">
    <property type="antibodies" value="340 antibodies from 42 providers"/>
</dbReference>
<dbReference type="DNASU" id="6257"/>
<dbReference type="Ensembl" id="ENST00000374680.4">
    <molecule id="P28702-1"/>
    <property type="protein sequence ID" value="ENSP00000363812.3"/>
    <property type="gene ID" value="ENSG00000204231.11"/>
</dbReference>
<dbReference type="Ensembl" id="ENST00000374685.8">
    <molecule id="P28702-3"/>
    <property type="protein sequence ID" value="ENSP00000363817.4"/>
    <property type="gene ID" value="ENSG00000204231.11"/>
</dbReference>
<dbReference type="Ensembl" id="ENST00000383216.8">
    <molecule id="P28702-3"/>
    <property type="protein sequence ID" value="ENSP00000372703.4"/>
    <property type="gene ID" value="ENSG00000206289.11"/>
</dbReference>
<dbReference type="Ensembl" id="ENST00000383217.8">
    <molecule id="P28702-1"/>
    <property type="protein sequence ID" value="ENSP00000372704.4"/>
    <property type="gene ID" value="ENSG00000206289.11"/>
</dbReference>
<dbReference type="Ensembl" id="ENST00000415157.6">
    <molecule id="P28702-1"/>
    <property type="protein sequence ID" value="ENSP00000402506.2"/>
    <property type="gene ID" value="ENSG00000228333.9"/>
</dbReference>
<dbReference type="Ensembl" id="ENST00000415909.6">
    <molecule id="P28702-1"/>
    <property type="protein sequence ID" value="ENSP00000410468.2"/>
    <property type="gene ID" value="ENSG00000235712.10"/>
</dbReference>
<dbReference type="Ensembl" id="ENST00000431161.6">
    <molecule id="P28702-3"/>
    <property type="protein sequence ID" value="ENSP00000393286.2"/>
    <property type="gene ID" value="ENSG00000235712.10"/>
</dbReference>
<dbReference type="Ensembl" id="ENST00000431820.6">
    <molecule id="P28702-1"/>
    <property type="protein sequence ID" value="ENSP00000411238.2"/>
    <property type="gene ID" value="ENSG00000231321.9"/>
</dbReference>
<dbReference type="Ensembl" id="ENST00000436753.6">
    <molecule id="P28702-1"/>
    <property type="protein sequence ID" value="ENSP00000415199.2"/>
    <property type="gene ID" value="ENSG00000227322.11"/>
</dbReference>
<dbReference type="Ensembl" id="ENST00000443603.6">
    <molecule id="P28702-3"/>
    <property type="protein sequence ID" value="ENSP00000402590.2"/>
    <property type="gene ID" value="ENSG00000227322.11"/>
</dbReference>
<dbReference type="Ensembl" id="ENST00000455462.6">
    <molecule id="P28702-3"/>
    <property type="protein sequence ID" value="ENSP00000400104.2"/>
    <property type="gene ID" value="ENSG00000228333.9"/>
</dbReference>
<dbReference type="Ensembl" id="ENST00000456244.6">
    <molecule id="P28702-3"/>
    <property type="protein sequence ID" value="ENSP00000393870.2"/>
    <property type="gene ID" value="ENSG00000231321.9"/>
</dbReference>
<dbReference type="GeneID" id="6257"/>
<dbReference type="KEGG" id="hsa:6257"/>
<dbReference type="MANE-Select" id="ENST00000374680.4">
    <property type="protein sequence ID" value="ENSP00000363812.3"/>
    <property type="RefSeq nucleotide sequence ID" value="NM_021976.5"/>
    <property type="RefSeq protein sequence ID" value="NP_068811.1"/>
</dbReference>
<dbReference type="UCSC" id="uc003odc.5">
    <molecule id="P28702-1"/>
    <property type="organism name" value="human"/>
</dbReference>
<dbReference type="AGR" id="HGNC:10478"/>
<dbReference type="CTD" id="6257"/>
<dbReference type="DisGeNET" id="6257"/>
<dbReference type="GeneCards" id="RXRB"/>
<dbReference type="HGNC" id="HGNC:10478">
    <property type="gene designation" value="RXRB"/>
</dbReference>
<dbReference type="HPA" id="ENSG00000204231">
    <property type="expression patterns" value="Low tissue specificity"/>
</dbReference>
<dbReference type="MIM" id="180246">
    <property type="type" value="gene"/>
</dbReference>
<dbReference type="neXtProt" id="NX_P28702"/>
<dbReference type="OpenTargets" id="ENSG00000204231"/>
<dbReference type="PharmGKB" id="PA34891"/>
<dbReference type="VEuPathDB" id="HostDB:ENSG00000204231"/>
<dbReference type="eggNOG" id="KOG3575">
    <property type="taxonomic scope" value="Eukaryota"/>
</dbReference>
<dbReference type="GeneTree" id="ENSGT00940000159208"/>
<dbReference type="HOGENOM" id="CLU_007368_5_4_1"/>
<dbReference type="InParanoid" id="P28702"/>
<dbReference type="OMA" id="DEHCRQE"/>
<dbReference type="OrthoDB" id="5873264at2759"/>
<dbReference type="PAN-GO" id="P28702">
    <property type="GO annotations" value="8 GO annotations based on evolutionary models"/>
</dbReference>
<dbReference type="PhylomeDB" id="P28702"/>
<dbReference type="TreeFam" id="TF352097"/>
<dbReference type="PathwayCommons" id="P28702"/>
<dbReference type="Reactome" id="R-HSA-1989781">
    <property type="pathway name" value="PPARA activates gene expression"/>
</dbReference>
<dbReference type="Reactome" id="R-HSA-383280">
    <property type="pathway name" value="Nuclear Receptor transcription pathway"/>
</dbReference>
<dbReference type="Reactome" id="R-HSA-5362517">
    <property type="pathway name" value="Signaling by Retinoic Acid"/>
</dbReference>
<dbReference type="Reactome" id="R-HSA-9029558">
    <property type="pathway name" value="NR1H2 &amp; NR1H3 regulate gene expression linked to lipogenesis"/>
</dbReference>
<dbReference type="Reactome" id="R-HSA-9029569">
    <property type="pathway name" value="NR1H3 &amp; NR1H2 regulate gene expression linked to cholesterol transport and efflux"/>
</dbReference>
<dbReference type="Reactome" id="R-HSA-9031525">
    <property type="pathway name" value="NR1H2 &amp; NR1H3 regulate gene expression to limit cholesterol uptake"/>
</dbReference>
<dbReference type="Reactome" id="R-HSA-9031528">
    <property type="pathway name" value="NR1H2 &amp; NR1H3 regulate gene expression linked to triglyceride lipolysis in adipose"/>
</dbReference>
<dbReference type="Reactome" id="R-HSA-9623433">
    <property type="pathway name" value="NR1H2 &amp; NR1H3 regulate gene expression to control bile acid homeostasis"/>
</dbReference>
<dbReference type="Reactome" id="R-HSA-9632974">
    <property type="pathway name" value="NR1H2 &amp; NR1H3 regulate gene expression linked to gluconeogenesis"/>
</dbReference>
<dbReference type="SignaLink" id="P28702"/>
<dbReference type="SIGNOR" id="P28702"/>
<dbReference type="BioGRID-ORCS" id="6257">
    <property type="hits" value="38 hits in 1200 CRISPR screens"/>
</dbReference>
<dbReference type="ChiTaRS" id="RXRB">
    <property type="organism name" value="human"/>
</dbReference>
<dbReference type="EvolutionaryTrace" id="P28702"/>
<dbReference type="GeneWiki" id="Retinoid_X_receptor_beta"/>
<dbReference type="GenomeRNAi" id="6257"/>
<dbReference type="Pharos" id="P28702">
    <property type="development level" value="Tclin"/>
</dbReference>
<dbReference type="PRO" id="PR:P28702"/>
<dbReference type="Proteomes" id="UP000005640">
    <property type="component" value="Chromosome 6"/>
</dbReference>
<dbReference type="RNAct" id="P28702">
    <property type="molecule type" value="protein"/>
</dbReference>
<dbReference type="Bgee" id="ENSG00000204231">
    <property type="expression patterns" value="Expressed in right lobe of thyroid gland and 96 other cell types or tissues"/>
</dbReference>
<dbReference type="ExpressionAtlas" id="P28702">
    <property type="expression patterns" value="baseline and differential"/>
</dbReference>
<dbReference type="GO" id="GO:0000785">
    <property type="term" value="C:chromatin"/>
    <property type="evidence" value="ECO:0000247"/>
    <property type="project" value="NTNU_SB"/>
</dbReference>
<dbReference type="GO" id="GO:0005829">
    <property type="term" value="C:cytosol"/>
    <property type="evidence" value="ECO:0000314"/>
    <property type="project" value="HPA"/>
</dbReference>
<dbReference type="GO" id="GO:0005730">
    <property type="term" value="C:nucleolus"/>
    <property type="evidence" value="ECO:0000314"/>
    <property type="project" value="HPA"/>
</dbReference>
<dbReference type="GO" id="GO:0005654">
    <property type="term" value="C:nucleoplasm"/>
    <property type="evidence" value="ECO:0000314"/>
    <property type="project" value="HPA"/>
</dbReference>
<dbReference type="GO" id="GO:0005634">
    <property type="term" value="C:nucleus"/>
    <property type="evidence" value="ECO:0000314"/>
    <property type="project" value="HGNC-UCL"/>
</dbReference>
<dbReference type="GO" id="GO:0090575">
    <property type="term" value="C:RNA polymerase II transcription regulator complex"/>
    <property type="evidence" value="ECO:0000353"/>
    <property type="project" value="ComplexPortal"/>
</dbReference>
<dbReference type="GO" id="GO:0031490">
    <property type="term" value="F:chromatin DNA binding"/>
    <property type="evidence" value="ECO:0007669"/>
    <property type="project" value="Ensembl"/>
</dbReference>
<dbReference type="GO" id="GO:0001228">
    <property type="term" value="F:DNA-binding transcription activator activity, RNA polymerase II-specific"/>
    <property type="evidence" value="ECO:0000314"/>
    <property type="project" value="NTNU_SB"/>
</dbReference>
<dbReference type="GO" id="GO:0000981">
    <property type="term" value="F:DNA-binding transcription factor activity, RNA polymerase II-specific"/>
    <property type="evidence" value="ECO:0000247"/>
    <property type="project" value="NTNU_SB"/>
</dbReference>
<dbReference type="GO" id="GO:0004879">
    <property type="term" value="F:nuclear receptor activity"/>
    <property type="evidence" value="ECO:0000314"/>
    <property type="project" value="GO_Central"/>
</dbReference>
<dbReference type="GO" id="GO:0003707">
    <property type="term" value="F:nuclear steroid receptor activity"/>
    <property type="evidence" value="ECO:0007669"/>
    <property type="project" value="InterPro"/>
</dbReference>
<dbReference type="GO" id="GO:0044323">
    <property type="term" value="F:retinoic acid-responsive element binding"/>
    <property type="evidence" value="ECO:0000318"/>
    <property type="project" value="GO_Central"/>
</dbReference>
<dbReference type="GO" id="GO:0000977">
    <property type="term" value="F:RNA polymerase II transcription regulatory region sequence-specific DNA binding"/>
    <property type="evidence" value="ECO:0000314"/>
    <property type="project" value="NTNU_SB"/>
</dbReference>
<dbReference type="GO" id="GO:1990837">
    <property type="term" value="F:sequence-specific double-stranded DNA binding"/>
    <property type="evidence" value="ECO:0000314"/>
    <property type="project" value="ARUK-UCL"/>
</dbReference>
<dbReference type="GO" id="GO:0008270">
    <property type="term" value="F:zinc ion binding"/>
    <property type="evidence" value="ECO:0007669"/>
    <property type="project" value="UniProtKB-KW"/>
</dbReference>
<dbReference type="GO" id="GO:0060038">
    <property type="term" value="P:cardiac muscle cell proliferation"/>
    <property type="evidence" value="ECO:0007669"/>
    <property type="project" value="Ensembl"/>
</dbReference>
<dbReference type="GO" id="GO:0030154">
    <property type="term" value="P:cell differentiation"/>
    <property type="evidence" value="ECO:0000318"/>
    <property type="project" value="GO_Central"/>
</dbReference>
<dbReference type="GO" id="GO:0071300">
    <property type="term" value="P:cellular response to retinoic acid"/>
    <property type="evidence" value="ECO:0007669"/>
    <property type="project" value="Ensembl"/>
</dbReference>
<dbReference type="GO" id="GO:0009755">
    <property type="term" value="P:hormone-mediated signaling pathway"/>
    <property type="evidence" value="ECO:0000250"/>
    <property type="project" value="ComplexPortal"/>
</dbReference>
<dbReference type="GO" id="GO:0001701">
    <property type="term" value="P:in utero embryonic development"/>
    <property type="evidence" value="ECO:0007669"/>
    <property type="project" value="Ensembl"/>
</dbReference>
<dbReference type="GO" id="GO:0001893">
    <property type="term" value="P:maternal placenta development"/>
    <property type="evidence" value="ECO:0007669"/>
    <property type="project" value="Ensembl"/>
</dbReference>
<dbReference type="GO" id="GO:0042789">
    <property type="term" value="P:mRNA transcription by RNA polymerase II"/>
    <property type="evidence" value="ECO:0000250"/>
    <property type="project" value="ComplexPortal"/>
</dbReference>
<dbReference type="GO" id="GO:0007399">
    <property type="term" value="P:nervous system development"/>
    <property type="evidence" value="ECO:0000318"/>
    <property type="project" value="GO_Central"/>
</dbReference>
<dbReference type="GO" id="GO:0030501">
    <property type="term" value="P:positive regulation of bone mineralization"/>
    <property type="evidence" value="ECO:0000303"/>
    <property type="project" value="ComplexPortal"/>
</dbReference>
<dbReference type="GO" id="GO:0045893">
    <property type="term" value="P:positive regulation of DNA-templated transcription"/>
    <property type="evidence" value="ECO:0000314"/>
    <property type="project" value="GO_Central"/>
</dbReference>
<dbReference type="GO" id="GO:0045944">
    <property type="term" value="P:positive regulation of transcription by RNA polymerase II"/>
    <property type="evidence" value="ECO:0000314"/>
    <property type="project" value="NTNU_SB"/>
</dbReference>
<dbReference type="GO" id="GO:0070564">
    <property type="term" value="P:positive regulation of vitamin D receptor signaling pathway"/>
    <property type="evidence" value="ECO:0000250"/>
    <property type="project" value="ComplexPortal"/>
</dbReference>
<dbReference type="GO" id="GO:0048384">
    <property type="term" value="P:retinoic acid receptor signaling pathway"/>
    <property type="evidence" value="ECO:0000318"/>
    <property type="project" value="GO_Central"/>
</dbReference>
<dbReference type="GO" id="GO:0055012">
    <property type="term" value="P:ventricular cardiac muscle cell differentiation"/>
    <property type="evidence" value="ECO:0007669"/>
    <property type="project" value="Ensembl"/>
</dbReference>
<dbReference type="CDD" id="cd06956">
    <property type="entry name" value="NR_DBD_RXR"/>
    <property type="match status" value="1"/>
</dbReference>
<dbReference type="CDD" id="cd06943">
    <property type="entry name" value="NR_LBD_RXR_like"/>
    <property type="match status" value="1"/>
</dbReference>
<dbReference type="FunFam" id="1.10.565.10:FF:000002">
    <property type="entry name" value="Retinoic acid receptor RXR-alpha"/>
    <property type="match status" value="1"/>
</dbReference>
<dbReference type="FunFam" id="3.30.50.10:FF:000005">
    <property type="entry name" value="Retinoic acid receptor RXR-alpha"/>
    <property type="match status" value="1"/>
</dbReference>
<dbReference type="Gene3D" id="3.30.50.10">
    <property type="entry name" value="Erythroid Transcription Factor GATA-1, subunit A"/>
    <property type="match status" value="1"/>
</dbReference>
<dbReference type="Gene3D" id="1.10.565.10">
    <property type="entry name" value="Retinoid X Receptor"/>
    <property type="match status" value="1"/>
</dbReference>
<dbReference type="IDEAL" id="IID00368"/>
<dbReference type="InterPro" id="IPR035500">
    <property type="entry name" value="NHR-like_dom_sf"/>
</dbReference>
<dbReference type="InterPro" id="IPR000536">
    <property type="entry name" value="Nucl_hrmn_rcpt_lig-bd"/>
</dbReference>
<dbReference type="InterPro" id="IPR050274">
    <property type="entry name" value="Nuclear_hormone_rcpt_NR2"/>
</dbReference>
<dbReference type="InterPro" id="IPR001723">
    <property type="entry name" value="Nuclear_hrmn_rcpt"/>
</dbReference>
<dbReference type="InterPro" id="IPR000003">
    <property type="entry name" value="Retinoid-X_rcpt/HNF4"/>
</dbReference>
<dbReference type="InterPro" id="IPR001628">
    <property type="entry name" value="Znf_hrmn_rcpt"/>
</dbReference>
<dbReference type="InterPro" id="IPR013088">
    <property type="entry name" value="Znf_NHR/GATA"/>
</dbReference>
<dbReference type="PANTHER" id="PTHR24083">
    <property type="entry name" value="NUCLEAR HORMONE RECEPTOR"/>
    <property type="match status" value="1"/>
</dbReference>
<dbReference type="Pfam" id="PF00104">
    <property type="entry name" value="Hormone_recep"/>
    <property type="match status" value="1"/>
</dbReference>
<dbReference type="Pfam" id="PF00105">
    <property type="entry name" value="zf-C4"/>
    <property type="match status" value="1"/>
</dbReference>
<dbReference type="PRINTS" id="PR00545">
    <property type="entry name" value="RETINOIDXR"/>
</dbReference>
<dbReference type="PRINTS" id="PR00398">
    <property type="entry name" value="STRDHORMONER"/>
</dbReference>
<dbReference type="PRINTS" id="PR00047">
    <property type="entry name" value="STROIDFINGER"/>
</dbReference>
<dbReference type="SMART" id="SM00430">
    <property type="entry name" value="HOLI"/>
    <property type="match status" value="1"/>
</dbReference>
<dbReference type="SMART" id="SM00399">
    <property type="entry name" value="ZnF_C4"/>
    <property type="match status" value="1"/>
</dbReference>
<dbReference type="SUPFAM" id="SSF57716">
    <property type="entry name" value="Glucocorticoid receptor-like (DNA-binding domain)"/>
    <property type="match status" value="1"/>
</dbReference>
<dbReference type="SUPFAM" id="SSF48508">
    <property type="entry name" value="Nuclear receptor ligand-binding domain"/>
    <property type="match status" value="1"/>
</dbReference>
<dbReference type="PROSITE" id="PS51843">
    <property type="entry name" value="NR_LBD"/>
    <property type="match status" value="1"/>
</dbReference>
<dbReference type="PROSITE" id="PS00031">
    <property type="entry name" value="NUCLEAR_REC_DBD_1"/>
    <property type="match status" value="1"/>
</dbReference>
<dbReference type="PROSITE" id="PS51030">
    <property type="entry name" value="NUCLEAR_REC_DBD_2"/>
    <property type="match status" value="1"/>
</dbReference>